<evidence type="ECO:0000250" key="1"/>
<evidence type="ECO:0000250" key="2">
    <source>
        <dbReference type="UniProtKB" id="P00157"/>
    </source>
</evidence>
<evidence type="ECO:0000255" key="3">
    <source>
        <dbReference type="PROSITE-ProRule" id="PRU00967"/>
    </source>
</evidence>
<evidence type="ECO:0000255" key="4">
    <source>
        <dbReference type="PROSITE-ProRule" id="PRU00968"/>
    </source>
</evidence>
<reference key="1">
    <citation type="journal article" date="1991" name="J. Mol. Evol.">
        <title>Evolution of the cytochrome b gene of mammals.</title>
        <authorList>
            <person name="Irwin D.M."/>
            <person name="Kocher T.D."/>
            <person name="Wilson A.C."/>
        </authorList>
    </citation>
    <scope>NUCLEOTIDE SEQUENCE [GENOMIC DNA]</scope>
</reference>
<comment type="function">
    <text evidence="2">Component of the ubiquinol-cytochrome c reductase complex (complex III or cytochrome b-c1 complex) that is part of the mitochondrial respiratory chain. The b-c1 complex mediates electron transfer from ubiquinol to cytochrome c. Contributes to the generation of a proton gradient across the mitochondrial membrane that is then used for ATP synthesis.</text>
</comment>
<comment type="cofactor">
    <cofactor evidence="2">
        <name>heme b</name>
        <dbReference type="ChEBI" id="CHEBI:60344"/>
    </cofactor>
    <text evidence="2">Binds 2 heme b groups non-covalently.</text>
</comment>
<comment type="subunit">
    <text evidence="2">The cytochrome bc1 complex contains 11 subunits: 3 respiratory subunits (MT-CYB, CYC1 and UQCRFS1), 2 core proteins (UQCRC1 and UQCRC2) and 6 low-molecular weight proteins (UQCRH/QCR6, UQCRB/QCR7, UQCRQ/QCR8, UQCR10/QCR9, UQCR11/QCR10 and a cleavage product of UQCRFS1). This cytochrome bc1 complex then forms a dimer.</text>
</comment>
<comment type="subcellular location">
    <subcellularLocation>
        <location evidence="2">Mitochondrion inner membrane</location>
        <topology evidence="2">Multi-pass membrane protein</topology>
    </subcellularLocation>
</comment>
<comment type="miscellaneous">
    <text evidence="1">Heme 1 (or BL or b562) is low-potential and absorbs at about 562 nm, and heme 2 (or BH or b566) is high-potential and absorbs at about 566 nm.</text>
</comment>
<comment type="similarity">
    <text evidence="3 4">Belongs to the cytochrome b family.</text>
</comment>
<comment type="caution">
    <text evidence="2">The full-length protein contains only eight transmembrane helices, not nine as predicted by bioinformatics tools.</text>
</comment>
<feature type="chain" id="PRO_0000061001" description="Cytochrome b">
    <location>
        <begin position="1"/>
        <end position="379"/>
    </location>
</feature>
<feature type="transmembrane region" description="Helical" evidence="2">
    <location>
        <begin position="33"/>
        <end position="53"/>
    </location>
</feature>
<feature type="transmembrane region" description="Helical" evidence="2">
    <location>
        <begin position="77"/>
        <end position="98"/>
    </location>
</feature>
<feature type="transmembrane region" description="Helical" evidence="2">
    <location>
        <begin position="113"/>
        <end position="133"/>
    </location>
</feature>
<feature type="transmembrane region" description="Helical" evidence="2">
    <location>
        <begin position="178"/>
        <end position="198"/>
    </location>
</feature>
<feature type="transmembrane region" description="Helical" evidence="2">
    <location>
        <begin position="226"/>
        <end position="246"/>
    </location>
</feature>
<feature type="transmembrane region" description="Helical" evidence="2">
    <location>
        <begin position="288"/>
        <end position="308"/>
    </location>
</feature>
<feature type="transmembrane region" description="Helical" evidence="2">
    <location>
        <begin position="320"/>
        <end position="340"/>
    </location>
</feature>
<feature type="transmembrane region" description="Helical" evidence="2">
    <location>
        <begin position="347"/>
        <end position="367"/>
    </location>
</feature>
<feature type="binding site" description="axial binding residue" evidence="2">
    <location>
        <position position="83"/>
    </location>
    <ligand>
        <name>heme b</name>
        <dbReference type="ChEBI" id="CHEBI:60344"/>
        <label>b562</label>
    </ligand>
    <ligandPart>
        <name>Fe</name>
        <dbReference type="ChEBI" id="CHEBI:18248"/>
    </ligandPart>
</feature>
<feature type="binding site" description="axial binding residue" evidence="2">
    <location>
        <position position="97"/>
    </location>
    <ligand>
        <name>heme b</name>
        <dbReference type="ChEBI" id="CHEBI:60344"/>
        <label>b566</label>
    </ligand>
    <ligandPart>
        <name>Fe</name>
        <dbReference type="ChEBI" id="CHEBI:18248"/>
    </ligandPart>
</feature>
<feature type="binding site" description="axial binding residue" evidence="2">
    <location>
        <position position="182"/>
    </location>
    <ligand>
        <name>heme b</name>
        <dbReference type="ChEBI" id="CHEBI:60344"/>
        <label>b562</label>
    </ligand>
    <ligandPart>
        <name>Fe</name>
        <dbReference type="ChEBI" id="CHEBI:18248"/>
    </ligandPart>
</feature>
<feature type="binding site" description="axial binding residue" evidence="2">
    <location>
        <position position="196"/>
    </location>
    <ligand>
        <name>heme b</name>
        <dbReference type="ChEBI" id="CHEBI:60344"/>
        <label>b566</label>
    </ligand>
    <ligandPart>
        <name>Fe</name>
        <dbReference type="ChEBI" id="CHEBI:18248"/>
    </ligandPart>
</feature>
<feature type="binding site" evidence="2">
    <location>
        <position position="201"/>
    </location>
    <ligand>
        <name>a ubiquinone</name>
        <dbReference type="ChEBI" id="CHEBI:16389"/>
    </ligand>
</feature>
<accession>P24957</accession>
<keyword id="KW-0249">Electron transport</keyword>
<keyword id="KW-0349">Heme</keyword>
<keyword id="KW-0408">Iron</keyword>
<keyword id="KW-0472">Membrane</keyword>
<keyword id="KW-0479">Metal-binding</keyword>
<keyword id="KW-0496">Mitochondrion</keyword>
<keyword id="KW-0999">Mitochondrion inner membrane</keyword>
<keyword id="KW-0679">Respiratory chain</keyword>
<keyword id="KW-0812">Transmembrane</keyword>
<keyword id="KW-1133">Transmembrane helix</keyword>
<keyword id="KW-0813">Transport</keyword>
<keyword id="KW-0830">Ubiquinone</keyword>
<gene>
    <name type="primary">MT-CYB</name>
    <name type="synonym">COB</name>
    <name type="synonym">CYTB</name>
    <name type="synonym">MTCYB</name>
</gene>
<geneLocation type="mitochondrion"/>
<dbReference type="EMBL" id="X56287">
    <property type="protein sequence ID" value="CAA39734.1"/>
    <property type="molecule type" value="Genomic_DNA"/>
</dbReference>
<dbReference type="PIR" id="S17411">
    <property type="entry name" value="S17411"/>
</dbReference>
<dbReference type="SMR" id="P24957"/>
<dbReference type="GO" id="GO:0005743">
    <property type="term" value="C:mitochondrial inner membrane"/>
    <property type="evidence" value="ECO:0007669"/>
    <property type="project" value="UniProtKB-SubCell"/>
</dbReference>
<dbReference type="GO" id="GO:0045275">
    <property type="term" value="C:respiratory chain complex III"/>
    <property type="evidence" value="ECO:0007669"/>
    <property type="project" value="InterPro"/>
</dbReference>
<dbReference type="GO" id="GO:0046872">
    <property type="term" value="F:metal ion binding"/>
    <property type="evidence" value="ECO:0007669"/>
    <property type="project" value="UniProtKB-KW"/>
</dbReference>
<dbReference type="GO" id="GO:0008121">
    <property type="term" value="F:ubiquinol-cytochrome-c reductase activity"/>
    <property type="evidence" value="ECO:0007669"/>
    <property type="project" value="InterPro"/>
</dbReference>
<dbReference type="GO" id="GO:0006122">
    <property type="term" value="P:mitochondrial electron transport, ubiquinol to cytochrome c"/>
    <property type="evidence" value="ECO:0007669"/>
    <property type="project" value="TreeGrafter"/>
</dbReference>
<dbReference type="CDD" id="cd00290">
    <property type="entry name" value="cytochrome_b_C"/>
    <property type="match status" value="1"/>
</dbReference>
<dbReference type="CDD" id="cd00284">
    <property type="entry name" value="Cytochrome_b_N"/>
    <property type="match status" value="1"/>
</dbReference>
<dbReference type="FunFam" id="1.20.810.10:FF:000002">
    <property type="entry name" value="Cytochrome b"/>
    <property type="match status" value="1"/>
</dbReference>
<dbReference type="Gene3D" id="1.20.810.10">
    <property type="entry name" value="Cytochrome Bc1 Complex, Chain C"/>
    <property type="match status" value="1"/>
</dbReference>
<dbReference type="InterPro" id="IPR005798">
    <property type="entry name" value="Cyt_b/b6_C"/>
</dbReference>
<dbReference type="InterPro" id="IPR036150">
    <property type="entry name" value="Cyt_b/b6_C_sf"/>
</dbReference>
<dbReference type="InterPro" id="IPR005797">
    <property type="entry name" value="Cyt_b/b6_N"/>
</dbReference>
<dbReference type="InterPro" id="IPR027387">
    <property type="entry name" value="Cytb/b6-like_sf"/>
</dbReference>
<dbReference type="InterPro" id="IPR030689">
    <property type="entry name" value="Cytochrome_b"/>
</dbReference>
<dbReference type="InterPro" id="IPR048260">
    <property type="entry name" value="Cytochrome_b_C_euk/bac"/>
</dbReference>
<dbReference type="InterPro" id="IPR048259">
    <property type="entry name" value="Cytochrome_b_N_euk/bac"/>
</dbReference>
<dbReference type="InterPro" id="IPR016174">
    <property type="entry name" value="Di-haem_cyt_TM"/>
</dbReference>
<dbReference type="PANTHER" id="PTHR19271">
    <property type="entry name" value="CYTOCHROME B"/>
    <property type="match status" value="1"/>
</dbReference>
<dbReference type="PANTHER" id="PTHR19271:SF16">
    <property type="entry name" value="CYTOCHROME B"/>
    <property type="match status" value="1"/>
</dbReference>
<dbReference type="Pfam" id="PF00032">
    <property type="entry name" value="Cytochrom_B_C"/>
    <property type="match status" value="1"/>
</dbReference>
<dbReference type="Pfam" id="PF00033">
    <property type="entry name" value="Cytochrome_B"/>
    <property type="match status" value="1"/>
</dbReference>
<dbReference type="PIRSF" id="PIRSF038885">
    <property type="entry name" value="COB"/>
    <property type="match status" value="1"/>
</dbReference>
<dbReference type="SUPFAM" id="SSF81648">
    <property type="entry name" value="a domain/subunit of cytochrome bc1 complex (Ubiquinol-cytochrome c reductase)"/>
    <property type="match status" value="1"/>
</dbReference>
<dbReference type="SUPFAM" id="SSF81342">
    <property type="entry name" value="Transmembrane di-heme cytochromes"/>
    <property type="match status" value="1"/>
</dbReference>
<dbReference type="PROSITE" id="PS51003">
    <property type="entry name" value="CYTB_CTER"/>
    <property type="match status" value="1"/>
</dbReference>
<dbReference type="PROSITE" id="PS51002">
    <property type="entry name" value="CYTB_NTER"/>
    <property type="match status" value="1"/>
</dbReference>
<organism>
    <name type="scientific">Giraffa camelopardalis</name>
    <name type="common">Giraffe</name>
    <dbReference type="NCBI Taxonomy" id="9894"/>
    <lineage>
        <taxon>Eukaryota</taxon>
        <taxon>Metazoa</taxon>
        <taxon>Chordata</taxon>
        <taxon>Craniata</taxon>
        <taxon>Vertebrata</taxon>
        <taxon>Euteleostomi</taxon>
        <taxon>Mammalia</taxon>
        <taxon>Eutheria</taxon>
        <taxon>Laurasiatheria</taxon>
        <taxon>Artiodactyla</taxon>
        <taxon>Ruminantia</taxon>
        <taxon>Pecora</taxon>
        <taxon>Giraffidae</taxon>
        <taxon>Giraffa</taxon>
    </lineage>
</organism>
<name>CYB_GIRCA</name>
<sequence length="379" mass="43034">MINIRKSHPLMKIVNNALIDLPAPSNISSWWNFGSLLGICLILQILTGLFLAMHYTPDTTTAFSSVTHICRDVNYGWIIRYMHANGASMFFICLFMHVGRGLYYGSYTFLETWNIGVILLFTVMATAFMEYVLPWGQMSFWGATVITNLLSAIPYIGTNLVEWIWGGFSVDKATLTRFFAFHFILPFIIMALTMVHLLFLHETGSNNPMGIPSDMDKIPFHPYYTIKDILGALLLILVLMLLVLFTPDLLGDPDNYTPANPLNTPPHIKPEWYFLFAYAILRSIPNKLGGVLALVLSILILIFMPLLHTSKQRSMMFRPFSQCLFWILVADLLTLTWIGGQPVEHPFIIIGQLASIMYFLIILVLMPVTSAIQNNLLKW</sequence>
<proteinExistence type="inferred from homology"/>
<protein>
    <recommendedName>
        <fullName>Cytochrome b</fullName>
    </recommendedName>
    <alternativeName>
        <fullName>Complex III subunit 3</fullName>
    </alternativeName>
    <alternativeName>
        <fullName>Complex III subunit III</fullName>
    </alternativeName>
    <alternativeName>
        <fullName>Cytochrome b-c1 complex subunit 3</fullName>
    </alternativeName>
    <alternativeName>
        <fullName>Ubiquinol-cytochrome-c reductase complex cytochrome b subunit</fullName>
    </alternativeName>
</protein>